<name>HEM1_PECAS</name>
<proteinExistence type="inferred from homology"/>
<accession>Q6D552</accession>
<protein>
    <recommendedName>
        <fullName evidence="1">Glutamyl-tRNA reductase</fullName>
        <shortName evidence="1">GluTR</shortName>
        <ecNumber evidence="1">1.2.1.70</ecNumber>
    </recommendedName>
</protein>
<comment type="function">
    <text evidence="1">Catalyzes the NADPH-dependent reduction of glutamyl-tRNA(Glu) to glutamate 1-semialdehyde (GSA).</text>
</comment>
<comment type="catalytic activity">
    <reaction evidence="1">
        <text>(S)-4-amino-5-oxopentanoate + tRNA(Glu) + NADP(+) = L-glutamyl-tRNA(Glu) + NADPH + H(+)</text>
        <dbReference type="Rhea" id="RHEA:12344"/>
        <dbReference type="Rhea" id="RHEA-COMP:9663"/>
        <dbReference type="Rhea" id="RHEA-COMP:9680"/>
        <dbReference type="ChEBI" id="CHEBI:15378"/>
        <dbReference type="ChEBI" id="CHEBI:57501"/>
        <dbReference type="ChEBI" id="CHEBI:57783"/>
        <dbReference type="ChEBI" id="CHEBI:58349"/>
        <dbReference type="ChEBI" id="CHEBI:78442"/>
        <dbReference type="ChEBI" id="CHEBI:78520"/>
        <dbReference type="EC" id="1.2.1.70"/>
    </reaction>
</comment>
<comment type="pathway">
    <text evidence="1">Porphyrin-containing compound metabolism; protoporphyrin-IX biosynthesis; 5-aminolevulinate from L-glutamyl-tRNA(Glu): step 1/2.</text>
</comment>
<comment type="subunit">
    <text evidence="1">Homodimer.</text>
</comment>
<comment type="domain">
    <text evidence="1">Possesses an unusual extended V-shaped dimeric structure with each monomer consisting of three distinct domains arranged along a curved 'spinal' alpha-helix. The N-terminal catalytic domain specifically recognizes the glutamate moiety of the substrate. The second domain is the NADPH-binding domain, and the third C-terminal domain is responsible for dimerization.</text>
</comment>
<comment type="miscellaneous">
    <text evidence="1">During catalysis, the active site Cys acts as a nucleophile attacking the alpha-carbonyl group of tRNA-bound glutamate with the formation of a thioester intermediate between enzyme and glutamate, and the concomitant release of tRNA(Glu). The thioester intermediate is finally reduced by direct hydride transfer from NADPH, to form the product GSA.</text>
</comment>
<comment type="similarity">
    <text evidence="1">Belongs to the glutamyl-tRNA reductase family.</text>
</comment>
<dbReference type="EC" id="1.2.1.70" evidence="1"/>
<dbReference type="EMBL" id="BX950851">
    <property type="protein sequence ID" value="CAG75091.1"/>
    <property type="molecule type" value="Genomic_DNA"/>
</dbReference>
<dbReference type="RefSeq" id="WP_011093748.1">
    <property type="nucleotide sequence ID" value="NC_004547.2"/>
</dbReference>
<dbReference type="SMR" id="Q6D552"/>
<dbReference type="STRING" id="218491.ECA2189"/>
<dbReference type="GeneID" id="57209089"/>
<dbReference type="KEGG" id="eca:ECA2189"/>
<dbReference type="PATRIC" id="fig|218491.5.peg.2223"/>
<dbReference type="eggNOG" id="COG0373">
    <property type="taxonomic scope" value="Bacteria"/>
</dbReference>
<dbReference type="HOGENOM" id="CLU_035113_2_2_6"/>
<dbReference type="OrthoDB" id="110209at2"/>
<dbReference type="UniPathway" id="UPA00251">
    <property type="reaction ID" value="UER00316"/>
</dbReference>
<dbReference type="Proteomes" id="UP000007966">
    <property type="component" value="Chromosome"/>
</dbReference>
<dbReference type="GO" id="GO:0008883">
    <property type="term" value="F:glutamyl-tRNA reductase activity"/>
    <property type="evidence" value="ECO:0007669"/>
    <property type="project" value="UniProtKB-UniRule"/>
</dbReference>
<dbReference type="GO" id="GO:0050661">
    <property type="term" value="F:NADP binding"/>
    <property type="evidence" value="ECO:0007669"/>
    <property type="project" value="InterPro"/>
</dbReference>
<dbReference type="GO" id="GO:0019353">
    <property type="term" value="P:protoporphyrinogen IX biosynthetic process from glutamate"/>
    <property type="evidence" value="ECO:0007669"/>
    <property type="project" value="TreeGrafter"/>
</dbReference>
<dbReference type="CDD" id="cd05213">
    <property type="entry name" value="NAD_bind_Glutamyl_tRNA_reduct"/>
    <property type="match status" value="1"/>
</dbReference>
<dbReference type="FunFam" id="3.30.460.30:FF:000001">
    <property type="entry name" value="Glutamyl-tRNA reductase"/>
    <property type="match status" value="1"/>
</dbReference>
<dbReference type="FunFam" id="3.40.50.720:FF:000031">
    <property type="entry name" value="Glutamyl-tRNA reductase"/>
    <property type="match status" value="1"/>
</dbReference>
<dbReference type="Gene3D" id="3.30.460.30">
    <property type="entry name" value="Glutamyl-tRNA reductase, N-terminal domain"/>
    <property type="match status" value="1"/>
</dbReference>
<dbReference type="Gene3D" id="3.40.50.720">
    <property type="entry name" value="NAD(P)-binding Rossmann-like Domain"/>
    <property type="match status" value="1"/>
</dbReference>
<dbReference type="HAMAP" id="MF_00087">
    <property type="entry name" value="Glu_tRNA_reductase"/>
    <property type="match status" value="1"/>
</dbReference>
<dbReference type="InterPro" id="IPR000343">
    <property type="entry name" value="4pyrrol_synth_GluRdtase"/>
</dbReference>
<dbReference type="InterPro" id="IPR015896">
    <property type="entry name" value="4pyrrol_synth_GluRdtase_dimer"/>
</dbReference>
<dbReference type="InterPro" id="IPR015895">
    <property type="entry name" value="4pyrrol_synth_GluRdtase_N"/>
</dbReference>
<dbReference type="InterPro" id="IPR018214">
    <property type="entry name" value="GluRdtase_CS"/>
</dbReference>
<dbReference type="InterPro" id="IPR036453">
    <property type="entry name" value="GluRdtase_dimer_dom_sf"/>
</dbReference>
<dbReference type="InterPro" id="IPR036343">
    <property type="entry name" value="GluRdtase_N_sf"/>
</dbReference>
<dbReference type="InterPro" id="IPR036291">
    <property type="entry name" value="NAD(P)-bd_dom_sf"/>
</dbReference>
<dbReference type="InterPro" id="IPR006151">
    <property type="entry name" value="Shikm_DH/Glu-tRNA_Rdtase"/>
</dbReference>
<dbReference type="NCBIfam" id="TIGR01035">
    <property type="entry name" value="hemA"/>
    <property type="match status" value="1"/>
</dbReference>
<dbReference type="PANTHER" id="PTHR43013">
    <property type="entry name" value="GLUTAMYL-TRNA REDUCTASE"/>
    <property type="match status" value="1"/>
</dbReference>
<dbReference type="PANTHER" id="PTHR43013:SF1">
    <property type="entry name" value="GLUTAMYL-TRNA REDUCTASE"/>
    <property type="match status" value="1"/>
</dbReference>
<dbReference type="Pfam" id="PF00745">
    <property type="entry name" value="GlutR_dimer"/>
    <property type="match status" value="1"/>
</dbReference>
<dbReference type="Pfam" id="PF05201">
    <property type="entry name" value="GlutR_N"/>
    <property type="match status" value="1"/>
</dbReference>
<dbReference type="Pfam" id="PF01488">
    <property type="entry name" value="Shikimate_DH"/>
    <property type="match status" value="1"/>
</dbReference>
<dbReference type="PIRSF" id="PIRSF000445">
    <property type="entry name" value="4pyrrol_synth_GluRdtase"/>
    <property type="match status" value="1"/>
</dbReference>
<dbReference type="SUPFAM" id="SSF69742">
    <property type="entry name" value="Glutamyl tRNA-reductase catalytic, N-terminal domain"/>
    <property type="match status" value="1"/>
</dbReference>
<dbReference type="SUPFAM" id="SSF69075">
    <property type="entry name" value="Glutamyl tRNA-reductase dimerization domain"/>
    <property type="match status" value="1"/>
</dbReference>
<dbReference type="SUPFAM" id="SSF51735">
    <property type="entry name" value="NAD(P)-binding Rossmann-fold domains"/>
    <property type="match status" value="1"/>
</dbReference>
<dbReference type="PROSITE" id="PS00747">
    <property type="entry name" value="GLUTR"/>
    <property type="match status" value="1"/>
</dbReference>
<organism>
    <name type="scientific">Pectobacterium atrosepticum (strain SCRI 1043 / ATCC BAA-672)</name>
    <name type="common">Erwinia carotovora subsp. atroseptica</name>
    <dbReference type="NCBI Taxonomy" id="218491"/>
    <lineage>
        <taxon>Bacteria</taxon>
        <taxon>Pseudomonadati</taxon>
        <taxon>Pseudomonadota</taxon>
        <taxon>Gammaproteobacteria</taxon>
        <taxon>Enterobacterales</taxon>
        <taxon>Pectobacteriaceae</taxon>
        <taxon>Pectobacterium</taxon>
    </lineage>
</organism>
<gene>
    <name evidence="1" type="primary">hemA</name>
    <name type="ordered locus">ECA2189</name>
</gene>
<feature type="chain" id="PRO_0000114026" description="Glutamyl-tRNA reductase">
    <location>
        <begin position="1"/>
        <end position="418"/>
    </location>
</feature>
<feature type="active site" description="Nucleophile" evidence="1">
    <location>
        <position position="50"/>
    </location>
</feature>
<feature type="binding site" evidence="1">
    <location>
        <begin position="49"/>
        <end position="52"/>
    </location>
    <ligand>
        <name>substrate</name>
    </ligand>
</feature>
<feature type="binding site" evidence="1">
    <location>
        <position position="109"/>
    </location>
    <ligand>
        <name>substrate</name>
    </ligand>
</feature>
<feature type="binding site" evidence="1">
    <location>
        <begin position="114"/>
        <end position="116"/>
    </location>
    <ligand>
        <name>substrate</name>
    </ligand>
</feature>
<feature type="binding site" evidence="1">
    <location>
        <position position="120"/>
    </location>
    <ligand>
        <name>substrate</name>
    </ligand>
</feature>
<feature type="binding site" evidence="1">
    <location>
        <begin position="189"/>
        <end position="194"/>
    </location>
    <ligand>
        <name>NADP(+)</name>
        <dbReference type="ChEBI" id="CHEBI:58349"/>
    </ligand>
</feature>
<feature type="site" description="Important for activity" evidence="1">
    <location>
        <position position="99"/>
    </location>
</feature>
<keyword id="KW-0521">NADP</keyword>
<keyword id="KW-0560">Oxidoreductase</keyword>
<keyword id="KW-0627">Porphyrin biosynthesis</keyword>
<keyword id="KW-1185">Reference proteome</keyword>
<evidence type="ECO:0000255" key="1">
    <source>
        <dbReference type="HAMAP-Rule" id="MF_00087"/>
    </source>
</evidence>
<sequence length="418" mass="46329">MTLLALGINHKTAPVSLRERVVFSQDKLGVALDSLLQQPLVQGGVVLSTCNRTELYLSVDEQENQREQLIRWLCEYHQLRPEEVNSSLYWHQGNAAVSHLMRVASGLDSLVLGEPQILGQVKKAFAESQRGHSLSSELERLFQKSFTVAKRVRTETDIGASAVSVAFAACTLARQIFESLADVTVLLVGAGETIELVARYLRDHNVQKMVIANRTRERAQALATEVGAEVITLAELDEQLVHADIVISSTASTLPIIGKGMMERTLKARRNQPMLMVDIAVPRDIEPEVGKLPNVYLYSVDDLHAIIQHNLAQRKAAAVQAESIVQQESSDFMAWLRAQSAVETIRDYRAQADELRAEMTAKALAAIQQGNDVEAVIQELTHRLTNRLIHAPTKSLQQAARDGDQNRLQILRDSLGLD</sequence>
<reference key="1">
    <citation type="journal article" date="2004" name="Proc. Natl. Acad. Sci. U.S.A.">
        <title>Genome sequence of the enterobacterial phytopathogen Erwinia carotovora subsp. atroseptica and characterization of virulence factors.</title>
        <authorList>
            <person name="Bell K.S."/>
            <person name="Sebaihia M."/>
            <person name="Pritchard L."/>
            <person name="Holden M.T.G."/>
            <person name="Hyman L.J."/>
            <person name="Holeva M.C."/>
            <person name="Thomson N.R."/>
            <person name="Bentley S.D."/>
            <person name="Churcher L.J.C."/>
            <person name="Mungall K."/>
            <person name="Atkin R."/>
            <person name="Bason N."/>
            <person name="Brooks K."/>
            <person name="Chillingworth T."/>
            <person name="Clark K."/>
            <person name="Doggett J."/>
            <person name="Fraser A."/>
            <person name="Hance Z."/>
            <person name="Hauser H."/>
            <person name="Jagels K."/>
            <person name="Moule S."/>
            <person name="Norbertczak H."/>
            <person name="Ormond D."/>
            <person name="Price C."/>
            <person name="Quail M.A."/>
            <person name="Sanders M."/>
            <person name="Walker D."/>
            <person name="Whitehead S."/>
            <person name="Salmond G.P.C."/>
            <person name="Birch P.R.J."/>
            <person name="Parkhill J."/>
            <person name="Toth I.K."/>
        </authorList>
    </citation>
    <scope>NUCLEOTIDE SEQUENCE [LARGE SCALE GENOMIC DNA]</scope>
    <source>
        <strain>SCRI 1043 / ATCC BAA-672</strain>
    </source>
</reference>